<comment type="function">
    <text evidence="1">Catalyzes the transfer of the enolpyruvyl moiety of phosphoenolpyruvate (PEP) to the 5-hydroxyl of shikimate-3-phosphate (S3P) to produce enolpyruvyl shikimate-3-phosphate and inorganic phosphate.</text>
</comment>
<comment type="catalytic activity">
    <reaction evidence="1">
        <text>3-phosphoshikimate + phosphoenolpyruvate = 5-O-(1-carboxyvinyl)-3-phosphoshikimate + phosphate</text>
        <dbReference type="Rhea" id="RHEA:21256"/>
        <dbReference type="ChEBI" id="CHEBI:43474"/>
        <dbReference type="ChEBI" id="CHEBI:57701"/>
        <dbReference type="ChEBI" id="CHEBI:58702"/>
        <dbReference type="ChEBI" id="CHEBI:145989"/>
        <dbReference type="EC" id="2.5.1.19"/>
    </reaction>
    <physiologicalReaction direction="left-to-right" evidence="1">
        <dbReference type="Rhea" id="RHEA:21257"/>
    </physiologicalReaction>
</comment>
<comment type="pathway">
    <text evidence="1">Metabolic intermediate biosynthesis; chorismate biosynthesis; chorismate from D-erythrose 4-phosphate and phosphoenolpyruvate: step 6/7.</text>
</comment>
<comment type="subunit">
    <text evidence="1">Monomer.</text>
</comment>
<comment type="subcellular location">
    <subcellularLocation>
        <location evidence="1">Cytoplasm</location>
    </subcellularLocation>
</comment>
<comment type="similarity">
    <text evidence="1">Belongs to the EPSP synthase family.</text>
</comment>
<sequence>MEKITLAPISRVEGEINLPGSKSLSNRALLLAALAKGTTKVTNLLDSDDIRHMLNALKALGVNYSLSEDKTVCTVEGVGGAFNWKNGLALFLGNAGTAMRPLTAALCLKGATEAEVVLTGEPRMKERPIKHLVDALRQAGASVQYLENEGYPPVAIRNSGLKGGKVQIDGSISSQFLTALLMAAPLAEGDMEIEIIGELVSKPYIDITLAMMKDFGVKVENRNYQTFVVKGNQSYLSPEKYLVEGDASSASYFLAAGAIKGKVKVTGIGKNSIQGDRLFANVLEAMGAKITWGDDFIQAEQGKLKGVDMDMNHIPDAAMTIATAALFAEGETVIRNIYNWRVKETDRLTAMATELRKVGATVEEGEDFIRIQPLPLTQFQHAEIATYNDHRMAMCFSLIALSDTPVTILDPKCTAKTFPTYFTEFEKLSERT</sequence>
<feature type="chain" id="PRO_1000099660" description="3-phosphoshikimate 1-carboxyvinyltransferase">
    <location>
        <begin position="1"/>
        <end position="432"/>
    </location>
</feature>
<feature type="active site" description="Proton acceptor" evidence="1">
    <location>
        <position position="316"/>
    </location>
</feature>
<feature type="binding site" evidence="1">
    <location>
        <position position="22"/>
    </location>
    <ligand>
        <name>3-phosphoshikimate</name>
        <dbReference type="ChEBI" id="CHEBI:145989"/>
    </ligand>
</feature>
<feature type="binding site" evidence="1">
    <location>
        <position position="22"/>
    </location>
    <ligand>
        <name>phosphoenolpyruvate</name>
        <dbReference type="ChEBI" id="CHEBI:58702"/>
    </ligand>
</feature>
<feature type="binding site" evidence="1">
    <location>
        <position position="23"/>
    </location>
    <ligand>
        <name>3-phosphoshikimate</name>
        <dbReference type="ChEBI" id="CHEBI:145989"/>
    </ligand>
</feature>
<feature type="binding site" evidence="1">
    <location>
        <position position="27"/>
    </location>
    <ligand>
        <name>3-phosphoshikimate</name>
        <dbReference type="ChEBI" id="CHEBI:145989"/>
    </ligand>
</feature>
<feature type="binding site" evidence="1">
    <location>
        <position position="96"/>
    </location>
    <ligand>
        <name>phosphoenolpyruvate</name>
        <dbReference type="ChEBI" id="CHEBI:58702"/>
    </ligand>
</feature>
<feature type="binding site" evidence="1">
    <location>
        <position position="127"/>
    </location>
    <ligand>
        <name>phosphoenolpyruvate</name>
        <dbReference type="ChEBI" id="CHEBI:58702"/>
    </ligand>
</feature>
<feature type="binding site" evidence="1">
    <location>
        <position position="173"/>
    </location>
    <ligand>
        <name>3-phosphoshikimate</name>
        <dbReference type="ChEBI" id="CHEBI:145989"/>
    </ligand>
</feature>
<feature type="binding site" evidence="1">
    <location>
        <position position="174"/>
    </location>
    <ligand>
        <name>3-phosphoshikimate</name>
        <dbReference type="ChEBI" id="CHEBI:145989"/>
    </ligand>
</feature>
<feature type="binding site" evidence="1">
    <location>
        <position position="175"/>
    </location>
    <ligand>
        <name>3-phosphoshikimate</name>
        <dbReference type="ChEBI" id="CHEBI:145989"/>
    </ligand>
</feature>
<feature type="binding site" evidence="1">
    <location>
        <position position="175"/>
    </location>
    <ligand>
        <name>phosphoenolpyruvate</name>
        <dbReference type="ChEBI" id="CHEBI:58702"/>
    </ligand>
</feature>
<feature type="binding site" evidence="1">
    <location>
        <position position="201"/>
    </location>
    <ligand>
        <name>3-phosphoshikimate</name>
        <dbReference type="ChEBI" id="CHEBI:145989"/>
    </ligand>
</feature>
<feature type="binding site" evidence="1">
    <location>
        <position position="316"/>
    </location>
    <ligand>
        <name>3-phosphoshikimate</name>
        <dbReference type="ChEBI" id="CHEBI:145989"/>
    </ligand>
</feature>
<feature type="binding site" evidence="1">
    <location>
        <position position="339"/>
    </location>
    <ligand>
        <name>3-phosphoshikimate</name>
        <dbReference type="ChEBI" id="CHEBI:145989"/>
    </ligand>
</feature>
<feature type="binding site" evidence="1">
    <location>
        <position position="343"/>
    </location>
    <ligand>
        <name>3-phosphoshikimate</name>
        <dbReference type="ChEBI" id="CHEBI:145989"/>
    </ligand>
</feature>
<feature type="binding site" evidence="1">
    <location>
        <position position="347"/>
    </location>
    <ligand>
        <name>phosphoenolpyruvate</name>
        <dbReference type="ChEBI" id="CHEBI:58702"/>
    </ligand>
</feature>
<feature type="binding site" evidence="1">
    <location>
        <position position="391"/>
    </location>
    <ligand>
        <name>phosphoenolpyruvate</name>
        <dbReference type="ChEBI" id="CHEBI:58702"/>
    </ligand>
</feature>
<feature type="binding site" evidence="1">
    <location>
        <position position="416"/>
    </location>
    <ligand>
        <name>phosphoenolpyruvate</name>
        <dbReference type="ChEBI" id="CHEBI:58702"/>
    </ligand>
</feature>
<organism>
    <name type="scientific">Actinobacillus pleuropneumoniae serotype 3 (strain JL03)</name>
    <dbReference type="NCBI Taxonomy" id="434271"/>
    <lineage>
        <taxon>Bacteria</taxon>
        <taxon>Pseudomonadati</taxon>
        <taxon>Pseudomonadota</taxon>
        <taxon>Gammaproteobacteria</taxon>
        <taxon>Pasteurellales</taxon>
        <taxon>Pasteurellaceae</taxon>
        <taxon>Actinobacillus</taxon>
    </lineage>
</organism>
<dbReference type="EC" id="2.5.1.19" evidence="1"/>
<dbReference type="EMBL" id="CP000687">
    <property type="protein sequence ID" value="ABY69266.1"/>
    <property type="molecule type" value="Genomic_DNA"/>
</dbReference>
<dbReference type="RefSeq" id="WP_005617198.1">
    <property type="nucleotide sequence ID" value="NC_010278.1"/>
</dbReference>
<dbReference type="SMR" id="B0BNY1"/>
<dbReference type="KEGG" id="apj:APJL_0697"/>
<dbReference type="HOGENOM" id="CLU_024321_0_0_6"/>
<dbReference type="UniPathway" id="UPA00053">
    <property type="reaction ID" value="UER00089"/>
</dbReference>
<dbReference type="Proteomes" id="UP000008547">
    <property type="component" value="Chromosome"/>
</dbReference>
<dbReference type="GO" id="GO:0005737">
    <property type="term" value="C:cytoplasm"/>
    <property type="evidence" value="ECO:0007669"/>
    <property type="project" value="UniProtKB-SubCell"/>
</dbReference>
<dbReference type="GO" id="GO:0003866">
    <property type="term" value="F:3-phosphoshikimate 1-carboxyvinyltransferase activity"/>
    <property type="evidence" value="ECO:0007669"/>
    <property type="project" value="UniProtKB-UniRule"/>
</dbReference>
<dbReference type="GO" id="GO:0008652">
    <property type="term" value="P:amino acid biosynthetic process"/>
    <property type="evidence" value="ECO:0007669"/>
    <property type="project" value="UniProtKB-KW"/>
</dbReference>
<dbReference type="GO" id="GO:0009073">
    <property type="term" value="P:aromatic amino acid family biosynthetic process"/>
    <property type="evidence" value="ECO:0007669"/>
    <property type="project" value="UniProtKB-KW"/>
</dbReference>
<dbReference type="GO" id="GO:0009423">
    <property type="term" value="P:chorismate biosynthetic process"/>
    <property type="evidence" value="ECO:0007669"/>
    <property type="project" value="UniProtKB-UniRule"/>
</dbReference>
<dbReference type="CDD" id="cd01556">
    <property type="entry name" value="EPSP_synthase"/>
    <property type="match status" value="1"/>
</dbReference>
<dbReference type="FunFam" id="3.65.10.10:FF:000003">
    <property type="entry name" value="3-phosphoshikimate 1-carboxyvinyltransferase"/>
    <property type="match status" value="1"/>
</dbReference>
<dbReference type="FunFam" id="3.65.10.10:FF:000004">
    <property type="entry name" value="3-phosphoshikimate 1-carboxyvinyltransferase"/>
    <property type="match status" value="1"/>
</dbReference>
<dbReference type="Gene3D" id="3.65.10.10">
    <property type="entry name" value="Enolpyruvate transferase domain"/>
    <property type="match status" value="2"/>
</dbReference>
<dbReference type="HAMAP" id="MF_00210">
    <property type="entry name" value="EPSP_synth"/>
    <property type="match status" value="1"/>
</dbReference>
<dbReference type="InterPro" id="IPR001986">
    <property type="entry name" value="Enolpyruvate_Tfrase_dom"/>
</dbReference>
<dbReference type="InterPro" id="IPR036968">
    <property type="entry name" value="Enolpyruvate_Tfrase_sf"/>
</dbReference>
<dbReference type="InterPro" id="IPR006264">
    <property type="entry name" value="EPSP_synthase"/>
</dbReference>
<dbReference type="InterPro" id="IPR023193">
    <property type="entry name" value="EPSP_synthase_CS"/>
</dbReference>
<dbReference type="InterPro" id="IPR013792">
    <property type="entry name" value="RNA3'P_cycl/enolpyr_Trfase_a/b"/>
</dbReference>
<dbReference type="NCBIfam" id="TIGR01356">
    <property type="entry name" value="aroA"/>
    <property type="match status" value="1"/>
</dbReference>
<dbReference type="PANTHER" id="PTHR21090">
    <property type="entry name" value="AROM/DEHYDROQUINATE SYNTHASE"/>
    <property type="match status" value="1"/>
</dbReference>
<dbReference type="PANTHER" id="PTHR21090:SF5">
    <property type="entry name" value="PENTAFUNCTIONAL AROM POLYPEPTIDE"/>
    <property type="match status" value="1"/>
</dbReference>
<dbReference type="Pfam" id="PF00275">
    <property type="entry name" value="EPSP_synthase"/>
    <property type="match status" value="1"/>
</dbReference>
<dbReference type="PIRSF" id="PIRSF000505">
    <property type="entry name" value="EPSPS"/>
    <property type="match status" value="1"/>
</dbReference>
<dbReference type="SUPFAM" id="SSF55205">
    <property type="entry name" value="EPT/RTPC-like"/>
    <property type="match status" value="1"/>
</dbReference>
<dbReference type="PROSITE" id="PS00104">
    <property type="entry name" value="EPSP_SYNTHASE_1"/>
    <property type="match status" value="1"/>
</dbReference>
<dbReference type="PROSITE" id="PS00885">
    <property type="entry name" value="EPSP_SYNTHASE_2"/>
    <property type="match status" value="1"/>
</dbReference>
<proteinExistence type="inferred from homology"/>
<protein>
    <recommendedName>
        <fullName evidence="1">3-phosphoshikimate 1-carboxyvinyltransferase</fullName>
        <ecNumber evidence="1">2.5.1.19</ecNumber>
    </recommendedName>
    <alternativeName>
        <fullName evidence="1">5-enolpyruvylshikimate-3-phosphate synthase</fullName>
        <shortName evidence="1">EPSP synthase</shortName>
        <shortName evidence="1">EPSPS</shortName>
    </alternativeName>
</protein>
<evidence type="ECO:0000255" key="1">
    <source>
        <dbReference type="HAMAP-Rule" id="MF_00210"/>
    </source>
</evidence>
<accession>B0BNY1</accession>
<name>AROA_ACTPJ</name>
<gene>
    <name evidence="1" type="primary">aroA</name>
    <name type="ordered locus">APJL_0697</name>
</gene>
<reference key="1">
    <citation type="journal article" date="2008" name="PLoS ONE">
        <title>Genome biology of Actinobacillus pleuropneumoniae JL03, an isolate of serotype 3 prevalent in China.</title>
        <authorList>
            <person name="Xu Z."/>
            <person name="Zhou Y."/>
            <person name="Li L."/>
            <person name="Zhou R."/>
            <person name="Xiao S."/>
            <person name="Wan Y."/>
            <person name="Zhang S."/>
            <person name="Wang K."/>
            <person name="Li W."/>
            <person name="Li L."/>
            <person name="Jin H."/>
            <person name="Kang M."/>
            <person name="Dalai B."/>
            <person name="Li T."/>
            <person name="Liu L."/>
            <person name="Cheng Y."/>
            <person name="Zhang L."/>
            <person name="Xu T."/>
            <person name="Zheng H."/>
            <person name="Pu S."/>
            <person name="Wang B."/>
            <person name="Gu W."/>
            <person name="Zhang X.L."/>
            <person name="Zhu G.-F."/>
            <person name="Wang S."/>
            <person name="Zhao G.-P."/>
            <person name="Chen H."/>
        </authorList>
    </citation>
    <scope>NUCLEOTIDE SEQUENCE [LARGE SCALE GENOMIC DNA]</scope>
    <source>
        <strain>JL03</strain>
    </source>
</reference>
<keyword id="KW-0028">Amino-acid biosynthesis</keyword>
<keyword id="KW-0057">Aromatic amino acid biosynthesis</keyword>
<keyword id="KW-0963">Cytoplasm</keyword>
<keyword id="KW-0808">Transferase</keyword>